<keyword id="KW-0378">Hydrolase</keyword>
<keyword id="KW-1185">Reference proteome</keyword>
<organism>
    <name type="scientific">Haemophilus influenzae (strain ATCC 51907 / DSM 11121 / KW20 / Rd)</name>
    <dbReference type="NCBI Taxonomy" id="71421"/>
    <lineage>
        <taxon>Bacteria</taxon>
        <taxon>Pseudomonadati</taxon>
        <taxon>Pseudomonadota</taxon>
        <taxon>Gammaproteobacteria</taxon>
        <taxon>Pasteurellales</taxon>
        <taxon>Pasteurellaceae</taxon>
        <taxon>Haemophilus</taxon>
    </lineage>
</organism>
<feature type="chain" id="PRO_0000057009" description="RNA pyrophosphohydrolase">
    <location>
        <begin position="1"/>
        <end position="196"/>
    </location>
</feature>
<feature type="domain" description="Nudix hydrolase" evidence="1">
    <location>
        <begin position="6"/>
        <end position="149"/>
    </location>
</feature>
<feature type="short sequence motif" description="Nudix box">
    <location>
        <begin position="38"/>
        <end position="59"/>
    </location>
</feature>
<sequence>MIDFDGYRPNVGIVICNRKGQVLWAKRCGQNSWQFPQGGINDNESAEQAMYRELHEEVGLQPKDVRLLYVSKHWLRYKLPKRLLRYDSKPMCIGQKQRWFLLQLVSDEKNINMQTTKSPEFDGWRWVSFWYPVRQVVSFKRDVYRKVMKEFASILFTDNPLIFSASREANSLHYSANKKYSQTKYTKRHFYKSRGQ</sequence>
<evidence type="ECO:0000255" key="1">
    <source>
        <dbReference type="HAMAP-Rule" id="MF_00298"/>
    </source>
</evidence>
<comment type="function">
    <text evidence="1">Accelerates the degradation of transcripts by removing pyrophosphate from the 5'-end of triphosphorylated RNA, leading to a more labile monophosphorylated state that can stimulate subsequent ribonuclease cleavage.</text>
</comment>
<comment type="cofactor">
    <cofactor evidence="1">
        <name>a divalent metal cation</name>
        <dbReference type="ChEBI" id="CHEBI:60240"/>
    </cofactor>
</comment>
<comment type="similarity">
    <text evidence="1">Belongs to the Nudix hydrolase family. RppH subfamily.</text>
</comment>
<proteinExistence type="inferred from homology"/>
<accession>Q57045</accession>
<accession>O05036</accession>
<gene>
    <name evidence="1" type="primary">rppH</name>
    <name evidence="1" type="synonym">nudH</name>
    <name type="ordered locus">HI_0901</name>
</gene>
<reference key="1">
    <citation type="journal article" date="1995" name="Science">
        <title>Whole-genome random sequencing and assembly of Haemophilus influenzae Rd.</title>
        <authorList>
            <person name="Fleischmann R.D."/>
            <person name="Adams M.D."/>
            <person name="White O."/>
            <person name="Clayton R.A."/>
            <person name="Kirkness E.F."/>
            <person name="Kerlavage A.R."/>
            <person name="Bult C.J."/>
            <person name="Tomb J.-F."/>
            <person name="Dougherty B.A."/>
            <person name="Merrick J.M."/>
            <person name="McKenney K."/>
            <person name="Sutton G.G."/>
            <person name="FitzHugh W."/>
            <person name="Fields C.A."/>
            <person name="Gocayne J.D."/>
            <person name="Scott J.D."/>
            <person name="Shirley R."/>
            <person name="Liu L.-I."/>
            <person name="Glodek A."/>
            <person name="Kelley J.M."/>
            <person name="Weidman J.F."/>
            <person name="Phillips C.A."/>
            <person name="Spriggs T."/>
            <person name="Hedblom E."/>
            <person name="Cotton M.D."/>
            <person name="Utterback T.R."/>
            <person name="Hanna M.C."/>
            <person name="Nguyen D.T."/>
            <person name="Saudek D.M."/>
            <person name="Brandon R.C."/>
            <person name="Fine L.D."/>
            <person name="Fritchman J.L."/>
            <person name="Fuhrmann J.L."/>
            <person name="Geoghagen N.S.M."/>
            <person name="Gnehm C.L."/>
            <person name="McDonald L.A."/>
            <person name="Small K.V."/>
            <person name="Fraser C.M."/>
            <person name="Smith H.O."/>
            <person name="Venter J.C."/>
        </authorList>
    </citation>
    <scope>NUCLEOTIDE SEQUENCE [LARGE SCALE GENOMIC DNA]</scope>
    <source>
        <strain>ATCC 51907 / DSM 11121 / KW20 / Rd</strain>
    </source>
</reference>
<protein>
    <recommendedName>
        <fullName evidence="1">RNA pyrophosphohydrolase</fullName>
        <ecNumber evidence="1">3.6.1.-</ecNumber>
    </recommendedName>
    <alternativeName>
        <fullName evidence="1">(Di)nucleoside polyphosphate hydrolase</fullName>
    </alternativeName>
</protein>
<name>RPPH_HAEIN</name>
<dbReference type="EC" id="3.6.1.-" evidence="1"/>
<dbReference type="EMBL" id="L42023">
    <property type="protein sequence ID" value="AAC22561.1"/>
    <property type="molecule type" value="Genomic_DNA"/>
</dbReference>
<dbReference type="PIR" id="E64101">
    <property type="entry name" value="E64101"/>
</dbReference>
<dbReference type="RefSeq" id="NP_439062.1">
    <property type="nucleotide sequence ID" value="NC_000907.1"/>
</dbReference>
<dbReference type="SMR" id="Q57045"/>
<dbReference type="STRING" id="71421.HI_0901"/>
<dbReference type="EnsemblBacteria" id="AAC22561">
    <property type="protein sequence ID" value="AAC22561"/>
    <property type="gene ID" value="HI_0901"/>
</dbReference>
<dbReference type="KEGG" id="hin:HI_0901"/>
<dbReference type="PATRIC" id="fig|71421.8.peg.943"/>
<dbReference type="eggNOG" id="COG0494">
    <property type="taxonomic scope" value="Bacteria"/>
</dbReference>
<dbReference type="HOGENOM" id="CLU_087195_3_2_6"/>
<dbReference type="OrthoDB" id="9816040at2"/>
<dbReference type="PhylomeDB" id="Q57045"/>
<dbReference type="BioCyc" id="HINF71421:G1GJ1-941-MONOMER"/>
<dbReference type="Proteomes" id="UP000000579">
    <property type="component" value="Chromosome"/>
</dbReference>
<dbReference type="GO" id="GO:0005737">
    <property type="term" value="C:cytoplasm"/>
    <property type="evidence" value="ECO:0000318"/>
    <property type="project" value="GO_Central"/>
</dbReference>
<dbReference type="GO" id="GO:0034353">
    <property type="term" value="F:mRNA 5'-diphosphatase activity"/>
    <property type="evidence" value="ECO:0000318"/>
    <property type="project" value="GO_Central"/>
</dbReference>
<dbReference type="GO" id="GO:0006402">
    <property type="term" value="P:mRNA catabolic process"/>
    <property type="evidence" value="ECO:0000318"/>
    <property type="project" value="GO_Central"/>
</dbReference>
<dbReference type="CDD" id="cd03671">
    <property type="entry name" value="NUDIX_Ap4A_hydrolase_plant_like"/>
    <property type="match status" value="1"/>
</dbReference>
<dbReference type="FunFam" id="3.90.79.10:FF:000001">
    <property type="entry name" value="RNA pyrophosphohydrolase"/>
    <property type="match status" value="1"/>
</dbReference>
<dbReference type="Gene3D" id="3.90.79.10">
    <property type="entry name" value="Nucleoside Triphosphate Pyrophosphohydrolase"/>
    <property type="match status" value="1"/>
</dbReference>
<dbReference type="HAMAP" id="MF_00298">
    <property type="entry name" value="Nudix_RppH"/>
    <property type="match status" value="1"/>
</dbReference>
<dbReference type="InterPro" id="IPR020476">
    <property type="entry name" value="Nudix_hydrolase"/>
</dbReference>
<dbReference type="InterPro" id="IPR015797">
    <property type="entry name" value="NUDIX_hydrolase-like_dom_sf"/>
</dbReference>
<dbReference type="InterPro" id="IPR020084">
    <property type="entry name" value="NUDIX_hydrolase_CS"/>
</dbReference>
<dbReference type="InterPro" id="IPR000086">
    <property type="entry name" value="NUDIX_hydrolase_dom"/>
</dbReference>
<dbReference type="InterPro" id="IPR022927">
    <property type="entry name" value="RppH"/>
</dbReference>
<dbReference type="NCBIfam" id="NF001934">
    <property type="entry name" value="PRK00714.1-1"/>
    <property type="match status" value="1"/>
</dbReference>
<dbReference type="NCBIfam" id="NF001937">
    <property type="entry name" value="PRK00714.1-4"/>
    <property type="match status" value="1"/>
</dbReference>
<dbReference type="NCBIfam" id="NF001938">
    <property type="entry name" value="PRK00714.1-5"/>
    <property type="match status" value="1"/>
</dbReference>
<dbReference type="PANTHER" id="PTHR23114">
    <property type="entry name" value="M7GPPPN-MRNA HYDROLASE"/>
    <property type="match status" value="1"/>
</dbReference>
<dbReference type="PANTHER" id="PTHR23114:SF17">
    <property type="entry name" value="M7GPPPN-MRNA HYDROLASE"/>
    <property type="match status" value="1"/>
</dbReference>
<dbReference type="Pfam" id="PF00293">
    <property type="entry name" value="NUDIX"/>
    <property type="match status" value="1"/>
</dbReference>
<dbReference type="PRINTS" id="PR00502">
    <property type="entry name" value="NUDIXFAMILY"/>
</dbReference>
<dbReference type="SUPFAM" id="SSF55811">
    <property type="entry name" value="Nudix"/>
    <property type="match status" value="1"/>
</dbReference>
<dbReference type="PROSITE" id="PS51462">
    <property type="entry name" value="NUDIX"/>
    <property type="match status" value="1"/>
</dbReference>
<dbReference type="PROSITE" id="PS00893">
    <property type="entry name" value="NUDIX_BOX"/>
    <property type="match status" value="1"/>
</dbReference>